<feature type="chain" id="PRO_0000109294" description="Fatty acid oxidation complex subunit alpha">
    <location>
        <begin position="1"/>
        <end position="723"/>
    </location>
</feature>
<feature type="region of interest" description="Enoyl-CoA hydratase/isomerase" evidence="1">
    <location>
        <begin position="1"/>
        <end position="189"/>
    </location>
</feature>
<feature type="region of interest" description="3-hydroxyacyl-CoA dehydrogenase" evidence="1">
    <location>
        <begin position="311"/>
        <end position="723"/>
    </location>
</feature>
<feature type="active site" description="For 3-hydroxyacyl-CoA dehydrogenase activity" evidence="1">
    <location>
        <position position="451"/>
    </location>
</feature>
<feature type="binding site" evidence="1">
    <location>
        <position position="296"/>
    </location>
    <ligand>
        <name>substrate</name>
    </ligand>
</feature>
<feature type="binding site" evidence="1">
    <location>
        <position position="325"/>
    </location>
    <ligand>
        <name>NAD(+)</name>
        <dbReference type="ChEBI" id="CHEBI:57540"/>
    </ligand>
</feature>
<feature type="binding site" evidence="1">
    <location>
        <position position="344"/>
    </location>
    <ligand>
        <name>NAD(+)</name>
        <dbReference type="ChEBI" id="CHEBI:57540"/>
    </ligand>
</feature>
<feature type="binding site" evidence="1">
    <location>
        <begin position="401"/>
        <end position="403"/>
    </location>
    <ligand>
        <name>NAD(+)</name>
        <dbReference type="ChEBI" id="CHEBI:57540"/>
    </ligand>
</feature>
<feature type="binding site" evidence="1">
    <location>
        <position position="408"/>
    </location>
    <ligand>
        <name>NAD(+)</name>
        <dbReference type="ChEBI" id="CHEBI:57540"/>
    </ligand>
</feature>
<feature type="binding site" evidence="1">
    <location>
        <position position="430"/>
    </location>
    <ligand>
        <name>NAD(+)</name>
        <dbReference type="ChEBI" id="CHEBI:57540"/>
    </ligand>
</feature>
<feature type="binding site" evidence="1">
    <location>
        <position position="454"/>
    </location>
    <ligand>
        <name>NAD(+)</name>
        <dbReference type="ChEBI" id="CHEBI:57540"/>
    </ligand>
</feature>
<feature type="binding site" evidence="1">
    <location>
        <position position="501"/>
    </location>
    <ligand>
        <name>substrate</name>
    </ligand>
</feature>
<feature type="binding site" evidence="1">
    <location>
        <position position="661"/>
    </location>
    <ligand>
        <name>substrate</name>
    </ligand>
</feature>
<feature type="site" description="Important for catalytic activity" evidence="1">
    <location>
        <position position="119"/>
    </location>
</feature>
<feature type="site" description="Important for catalytic activity" evidence="1">
    <location>
        <position position="139"/>
    </location>
</feature>
<dbReference type="EC" id="4.2.1.17" evidence="1"/>
<dbReference type="EC" id="5.1.2.3" evidence="1"/>
<dbReference type="EC" id="5.3.3.8" evidence="1"/>
<dbReference type="EC" id="1.1.1.35" evidence="1"/>
<dbReference type="EMBL" id="BA000037">
    <property type="protein sequence ID" value="BAC92793.1"/>
    <property type="molecule type" value="Genomic_DNA"/>
</dbReference>
<dbReference type="RefSeq" id="WP_011149065.1">
    <property type="nucleotide sequence ID" value="NC_005139.1"/>
</dbReference>
<dbReference type="SMR" id="Q7MQH9"/>
<dbReference type="STRING" id="672.VV93_v1c00180"/>
<dbReference type="KEGG" id="vvy:VV0029"/>
<dbReference type="PATRIC" id="fig|196600.6.peg.82"/>
<dbReference type="eggNOG" id="COG1024">
    <property type="taxonomic scope" value="Bacteria"/>
</dbReference>
<dbReference type="eggNOG" id="COG1250">
    <property type="taxonomic scope" value="Bacteria"/>
</dbReference>
<dbReference type="HOGENOM" id="CLU_009834_16_3_6"/>
<dbReference type="UniPathway" id="UPA00659"/>
<dbReference type="Proteomes" id="UP000002675">
    <property type="component" value="Chromosome I"/>
</dbReference>
<dbReference type="GO" id="GO:0036125">
    <property type="term" value="C:fatty acid beta-oxidation multienzyme complex"/>
    <property type="evidence" value="ECO:0007669"/>
    <property type="project" value="InterPro"/>
</dbReference>
<dbReference type="GO" id="GO:0008692">
    <property type="term" value="F:3-hydroxybutyryl-CoA epimerase activity"/>
    <property type="evidence" value="ECO:0007669"/>
    <property type="project" value="UniProtKB-UniRule"/>
</dbReference>
<dbReference type="GO" id="GO:0004165">
    <property type="term" value="F:delta(3)-delta(2)-enoyl-CoA isomerase activity"/>
    <property type="evidence" value="ECO:0007669"/>
    <property type="project" value="UniProtKB-UniRule"/>
</dbReference>
<dbReference type="GO" id="GO:0004300">
    <property type="term" value="F:enoyl-CoA hydratase activity"/>
    <property type="evidence" value="ECO:0007669"/>
    <property type="project" value="UniProtKB-UniRule"/>
</dbReference>
<dbReference type="GO" id="GO:0016509">
    <property type="term" value="F:long-chain-3-hydroxyacyl-CoA dehydrogenase activity"/>
    <property type="evidence" value="ECO:0007669"/>
    <property type="project" value="TreeGrafter"/>
</dbReference>
<dbReference type="GO" id="GO:0070403">
    <property type="term" value="F:NAD+ binding"/>
    <property type="evidence" value="ECO:0007669"/>
    <property type="project" value="InterPro"/>
</dbReference>
<dbReference type="GO" id="GO:0006635">
    <property type="term" value="P:fatty acid beta-oxidation"/>
    <property type="evidence" value="ECO:0007669"/>
    <property type="project" value="UniProtKB-UniRule"/>
</dbReference>
<dbReference type="CDD" id="cd06558">
    <property type="entry name" value="crotonase-like"/>
    <property type="match status" value="1"/>
</dbReference>
<dbReference type="FunFam" id="3.40.50.720:FF:000009">
    <property type="entry name" value="Fatty oxidation complex, alpha subunit"/>
    <property type="match status" value="1"/>
</dbReference>
<dbReference type="Gene3D" id="1.10.1040.50">
    <property type="match status" value="1"/>
</dbReference>
<dbReference type="Gene3D" id="3.90.226.10">
    <property type="entry name" value="2-enoyl-CoA Hydratase, Chain A, domain 1"/>
    <property type="match status" value="1"/>
</dbReference>
<dbReference type="Gene3D" id="3.40.50.720">
    <property type="entry name" value="NAD(P)-binding Rossmann-like Domain"/>
    <property type="match status" value="1"/>
</dbReference>
<dbReference type="HAMAP" id="MF_01621">
    <property type="entry name" value="FadB"/>
    <property type="match status" value="1"/>
</dbReference>
<dbReference type="InterPro" id="IPR006180">
    <property type="entry name" value="3-OHacyl-CoA_DH_CS"/>
</dbReference>
<dbReference type="InterPro" id="IPR006176">
    <property type="entry name" value="3-OHacyl-CoA_DH_NAD-bd"/>
</dbReference>
<dbReference type="InterPro" id="IPR006108">
    <property type="entry name" value="3HC_DH_C"/>
</dbReference>
<dbReference type="InterPro" id="IPR008927">
    <property type="entry name" value="6-PGluconate_DH-like_C_sf"/>
</dbReference>
<dbReference type="InterPro" id="IPR029045">
    <property type="entry name" value="ClpP/crotonase-like_dom_sf"/>
</dbReference>
<dbReference type="InterPro" id="IPR001753">
    <property type="entry name" value="Enoyl-CoA_hydra/iso"/>
</dbReference>
<dbReference type="InterPro" id="IPR050136">
    <property type="entry name" value="FA_oxidation_alpha_subunit"/>
</dbReference>
<dbReference type="InterPro" id="IPR012799">
    <property type="entry name" value="FadB"/>
</dbReference>
<dbReference type="InterPro" id="IPR036291">
    <property type="entry name" value="NAD(P)-bd_dom_sf"/>
</dbReference>
<dbReference type="NCBIfam" id="TIGR02437">
    <property type="entry name" value="FadB"/>
    <property type="match status" value="1"/>
</dbReference>
<dbReference type="NCBIfam" id="NF008727">
    <property type="entry name" value="PRK11730.1"/>
    <property type="match status" value="1"/>
</dbReference>
<dbReference type="PANTHER" id="PTHR43612">
    <property type="entry name" value="TRIFUNCTIONAL ENZYME SUBUNIT ALPHA"/>
    <property type="match status" value="1"/>
</dbReference>
<dbReference type="PANTHER" id="PTHR43612:SF3">
    <property type="entry name" value="TRIFUNCTIONAL ENZYME SUBUNIT ALPHA, MITOCHONDRIAL"/>
    <property type="match status" value="1"/>
</dbReference>
<dbReference type="Pfam" id="PF00725">
    <property type="entry name" value="3HCDH"/>
    <property type="match status" value="2"/>
</dbReference>
<dbReference type="Pfam" id="PF02737">
    <property type="entry name" value="3HCDH_N"/>
    <property type="match status" value="1"/>
</dbReference>
<dbReference type="Pfam" id="PF00378">
    <property type="entry name" value="ECH_1"/>
    <property type="match status" value="1"/>
</dbReference>
<dbReference type="SUPFAM" id="SSF48179">
    <property type="entry name" value="6-phosphogluconate dehydrogenase C-terminal domain-like"/>
    <property type="match status" value="2"/>
</dbReference>
<dbReference type="SUPFAM" id="SSF52096">
    <property type="entry name" value="ClpP/crotonase"/>
    <property type="match status" value="1"/>
</dbReference>
<dbReference type="SUPFAM" id="SSF51735">
    <property type="entry name" value="NAD(P)-binding Rossmann-fold domains"/>
    <property type="match status" value="1"/>
</dbReference>
<dbReference type="PROSITE" id="PS00067">
    <property type="entry name" value="3HCDH"/>
    <property type="match status" value="1"/>
</dbReference>
<keyword id="KW-0276">Fatty acid metabolism</keyword>
<keyword id="KW-0413">Isomerase</keyword>
<keyword id="KW-0442">Lipid degradation</keyword>
<keyword id="KW-0443">Lipid metabolism</keyword>
<keyword id="KW-0456">Lyase</keyword>
<keyword id="KW-0511">Multifunctional enzyme</keyword>
<keyword id="KW-0520">NAD</keyword>
<keyword id="KW-0560">Oxidoreductase</keyword>
<organism>
    <name type="scientific">Vibrio vulnificus (strain YJ016)</name>
    <dbReference type="NCBI Taxonomy" id="196600"/>
    <lineage>
        <taxon>Bacteria</taxon>
        <taxon>Pseudomonadati</taxon>
        <taxon>Pseudomonadota</taxon>
        <taxon>Gammaproteobacteria</taxon>
        <taxon>Vibrionales</taxon>
        <taxon>Vibrionaceae</taxon>
        <taxon>Vibrio</taxon>
    </lineage>
</organism>
<gene>
    <name evidence="1" type="primary">fadB</name>
    <name type="ordered locus">VV0029</name>
</gene>
<sequence>MIYQAETLQVKEVQDGVAEILFCAQNSVNKLDLATLASLDKALDALTAHSGLKGVMLTSDKEAFIVGADITEFLGLFAKPEEELDQWLQFANSIFNKLEDLPVPTVAVVKGHTLGGGCECVLATDLRIGDKTTSIGLPETKLGIMPGFGGCVRLPRVIGADSAMEIITQGKACRAEEALKIGLLDAVVDSDRLYASALQTLTDAINEKIDWKARRQQKTSALTLSKLEAMMSFTMAKGLVAQVAGPHYPAPMTAVVTIEEGARFARNQALDIERKHFVKLAKSEEAKALVGLFLNDQYIKGIAKKAAKSANKETQRAAVLGAGIMGGGIAYQSALKGVPVIMKDIAQASLDLGMTEASKLLNKQLERGKIDGFKMAGILASITPSLHYAGIDNADIIVEAVVENPKVKAAVLSEVEEQVSEETVLTSNTSTIPINLLAKSLKRPENFCGMHFFNPVHRMPLVEIIRGEHTSDETINRVVAYAAKMGKSPIVVNDCPGFFVNRVLFPYFGGFSMLLRDGADFTQIDKVMERKFGWPMGPAYLLDVVGIDTAHHAQAVMAQGFPERMGKQGRDAIDALFEANKYGQKNGSGFYTYTMDKKGKPKKAFSDEIVPILAPVCAAQQAFDDQTIIQRMMIPMINEVVLCLQEGIIASAQEADMALVYGLGFPPFRGGVFRYLDSVGIANFVAMAQQHVELGAMYQVPQMLIDMAERGQTFYGAQQQGSI</sequence>
<evidence type="ECO:0000255" key="1">
    <source>
        <dbReference type="HAMAP-Rule" id="MF_01621"/>
    </source>
</evidence>
<name>FADB_VIBVY</name>
<reference key="1">
    <citation type="journal article" date="2003" name="Genome Res.">
        <title>Comparative genome analysis of Vibrio vulnificus, a marine pathogen.</title>
        <authorList>
            <person name="Chen C.-Y."/>
            <person name="Wu K.-M."/>
            <person name="Chang Y.-C."/>
            <person name="Chang C.-H."/>
            <person name="Tsai H.-C."/>
            <person name="Liao T.-L."/>
            <person name="Liu Y.-M."/>
            <person name="Chen H.-J."/>
            <person name="Shen A.B.-T."/>
            <person name="Li J.-C."/>
            <person name="Su T.-L."/>
            <person name="Shao C.-P."/>
            <person name="Lee C.-T."/>
            <person name="Hor L.-I."/>
            <person name="Tsai S.-F."/>
        </authorList>
    </citation>
    <scope>NUCLEOTIDE SEQUENCE [LARGE SCALE GENOMIC DNA]</scope>
    <source>
        <strain>YJ016</strain>
    </source>
</reference>
<accession>Q7MQH9</accession>
<comment type="function">
    <text evidence="1">Involved in the aerobic and anaerobic degradation of long-chain fatty acids via beta-oxidation cycle. Catalyzes the formation of 3-oxoacyl-CoA from enoyl-CoA via L-3-hydroxyacyl-CoA. It can also use D-3-hydroxyacyl-CoA and cis-3-enoyl-CoA as substrate.</text>
</comment>
<comment type="catalytic activity">
    <reaction evidence="1">
        <text>a (3S)-3-hydroxyacyl-CoA + NAD(+) = a 3-oxoacyl-CoA + NADH + H(+)</text>
        <dbReference type="Rhea" id="RHEA:22432"/>
        <dbReference type="ChEBI" id="CHEBI:15378"/>
        <dbReference type="ChEBI" id="CHEBI:57318"/>
        <dbReference type="ChEBI" id="CHEBI:57540"/>
        <dbReference type="ChEBI" id="CHEBI:57945"/>
        <dbReference type="ChEBI" id="CHEBI:90726"/>
        <dbReference type="EC" id="1.1.1.35"/>
    </reaction>
</comment>
<comment type="catalytic activity">
    <reaction evidence="1">
        <text>a (3S)-3-hydroxyacyl-CoA = a (2E)-enoyl-CoA + H2O</text>
        <dbReference type="Rhea" id="RHEA:16105"/>
        <dbReference type="ChEBI" id="CHEBI:15377"/>
        <dbReference type="ChEBI" id="CHEBI:57318"/>
        <dbReference type="ChEBI" id="CHEBI:58856"/>
        <dbReference type="EC" id="4.2.1.17"/>
    </reaction>
</comment>
<comment type="catalytic activity">
    <reaction evidence="1">
        <text>a 4-saturated-(3S)-3-hydroxyacyl-CoA = a (3E)-enoyl-CoA + H2O</text>
        <dbReference type="Rhea" id="RHEA:20724"/>
        <dbReference type="ChEBI" id="CHEBI:15377"/>
        <dbReference type="ChEBI" id="CHEBI:58521"/>
        <dbReference type="ChEBI" id="CHEBI:137480"/>
        <dbReference type="EC" id="4.2.1.17"/>
    </reaction>
</comment>
<comment type="catalytic activity">
    <reaction evidence="1">
        <text>(3S)-3-hydroxybutanoyl-CoA = (3R)-3-hydroxybutanoyl-CoA</text>
        <dbReference type="Rhea" id="RHEA:21760"/>
        <dbReference type="ChEBI" id="CHEBI:57315"/>
        <dbReference type="ChEBI" id="CHEBI:57316"/>
        <dbReference type="EC" id="5.1.2.3"/>
    </reaction>
</comment>
<comment type="catalytic activity">
    <reaction evidence="1">
        <text>a (3Z)-enoyl-CoA = a 4-saturated (2E)-enoyl-CoA</text>
        <dbReference type="Rhea" id="RHEA:45900"/>
        <dbReference type="ChEBI" id="CHEBI:85097"/>
        <dbReference type="ChEBI" id="CHEBI:85489"/>
        <dbReference type="EC" id="5.3.3.8"/>
    </reaction>
</comment>
<comment type="catalytic activity">
    <reaction evidence="1">
        <text>a (3E)-enoyl-CoA = a 4-saturated (2E)-enoyl-CoA</text>
        <dbReference type="Rhea" id="RHEA:45228"/>
        <dbReference type="ChEBI" id="CHEBI:58521"/>
        <dbReference type="ChEBI" id="CHEBI:85097"/>
        <dbReference type="EC" id="5.3.3.8"/>
    </reaction>
</comment>
<comment type="pathway">
    <text evidence="1">Lipid metabolism; fatty acid beta-oxidation.</text>
</comment>
<comment type="subunit">
    <text evidence="1">Heterotetramer of two alpha chains (FadB) and two beta chains (FadA).</text>
</comment>
<comment type="similarity">
    <text evidence="1">In the N-terminal section; belongs to the enoyl-CoA hydratase/isomerase family.</text>
</comment>
<comment type="similarity">
    <text evidence="1">In the C-terminal section; belongs to the 3-hydroxyacyl-CoA dehydrogenase family.</text>
</comment>
<proteinExistence type="inferred from homology"/>
<protein>
    <recommendedName>
        <fullName evidence="1">Fatty acid oxidation complex subunit alpha</fullName>
    </recommendedName>
    <domain>
        <recommendedName>
            <fullName evidence="1">Enoyl-CoA hydratase/Delta(3)-cis-Delta(2)-trans-enoyl-CoA isomerase/3-hydroxybutyryl-CoA epimerase</fullName>
            <ecNumber evidence="1">4.2.1.17</ecNumber>
            <ecNumber evidence="1">5.1.2.3</ecNumber>
            <ecNumber evidence="1">5.3.3.8</ecNumber>
        </recommendedName>
    </domain>
    <domain>
        <recommendedName>
            <fullName evidence="1">3-hydroxyacyl-CoA dehydrogenase</fullName>
            <ecNumber evidence="1">1.1.1.35</ecNumber>
        </recommendedName>
    </domain>
</protein>